<proteinExistence type="inferred from homology"/>
<gene>
    <name evidence="1" type="primary">cmk</name>
    <name type="ordered locus">AB57_1816</name>
</gene>
<accession>B7I530</accession>
<reference key="1">
    <citation type="journal article" date="2008" name="J. Bacteriol.">
        <title>Comparative genome sequence analysis of multidrug-resistant Acinetobacter baumannii.</title>
        <authorList>
            <person name="Adams M.D."/>
            <person name="Goglin K."/>
            <person name="Molyneaux N."/>
            <person name="Hujer K.M."/>
            <person name="Lavender H."/>
            <person name="Jamison J.J."/>
            <person name="MacDonald I.J."/>
            <person name="Martin K.M."/>
            <person name="Russo T."/>
            <person name="Campagnari A.A."/>
            <person name="Hujer A.M."/>
            <person name="Bonomo R.A."/>
            <person name="Gill S.R."/>
        </authorList>
    </citation>
    <scope>NUCLEOTIDE SEQUENCE [LARGE SCALE GENOMIC DNA]</scope>
    <source>
        <strain>AB0057</strain>
    </source>
</reference>
<name>KCY_ACIB5</name>
<sequence length="228" mass="25238">MTVQIITIDGPSGSGKGTLAAKLAAYYQFHLLDSGALYRLLGLSLHKHDLLEKLDSHLDMCVNYARQLNIKFETSAEGTLVFLDGEDVTQTIRTERVGEYASKVAAIPELRQALFERQRAFAQTPGLVADGRDMATSIFPEANAKIYLTASAESRAERRVKQLQGMGLDAKINDILANIQARDKRDMEREVAPLKPAADAYIIDSSELTIDQVFKLMVDYVNSRTVSN</sequence>
<evidence type="ECO:0000255" key="1">
    <source>
        <dbReference type="HAMAP-Rule" id="MF_00238"/>
    </source>
</evidence>
<protein>
    <recommendedName>
        <fullName evidence="1">Cytidylate kinase</fullName>
        <shortName evidence="1">CK</shortName>
        <ecNumber evidence="1">2.7.4.25</ecNumber>
    </recommendedName>
    <alternativeName>
        <fullName evidence="1">Cytidine monophosphate kinase</fullName>
        <shortName evidence="1">CMP kinase</shortName>
    </alternativeName>
</protein>
<organism>
    <name type="scientific">Acinetobacter baumannii (strain AB0057)</name>
    <dbReference type="NCBI Taxonomy" id="480119"/>
    <lineage>
        <taxon>Bacteria</taxon>
        <taxon>Pseudomonadati</taxon>
        <taxon>Pseudomonadota</taxon>
        <taxon>Gammaproteobacteria</taxon>
        <taxon>Moraxellales</taxon>
        <taxon>Moraxellaceae</taxon>
        <taxon>Acinetobacter</taxon>
        <taxon>Acinetobacter calcoaceticus/baumannii complex</taxon>
    </lineage>
</organism>
<keyword id="KW-0067">ATP-binding</keyword>
<keyword id="KW-0963">Cytoplasm</keyword>
<keyword id="KW-0418">Kinase</keyword>
<keyword id="KW-0547">Nucleotide-binding</keyword>
<keyword id="KW-0808">Transferase</keyword>
<comment type="catalytic activity">
    <reaction evidence="1">
        <text>CMP + ATP = CDP + ADP</text>
        <dbReference type="Rhea" id="RHEA:11600"/>
        <dbReference type="ChEBI" id="CHEBI:30616"/>
        <dbReference type="ChEBI" id="CHEBI:58069"/>
        <dbReference type="ChEBI" id="CHEBI:60377"/>
        <dbReference type="ChEBI" id="CHEBI:456216"/>
        <dbReference type="EC" id="2.7.4.25"/>
    </reaction>
</comment>
<comment type="catalytic activity">
    <reaction evidence="1">
        <text>dCMP + ATP = dCDP + ADP</text>
        <dbReference type="Rhea" id="RHEA:25094"/>
        <dbReference type="ChEBI" id="CHEBI:30616"/>
        <dbReference type="ChEBI" id="CHEBI:57566"/>
        <dbReference type="ChEBI" id="CHEBI:58593"/>
        <dbReference type="ChEBI" id="CHEBI:456216"/>
        <dbReference type="EC" id="2.7.4.25"/>
    </reaction>
</comment>
<comment type="subcellular location">
    <subcellularLocation>
        <location evidence="1">Cytoplasm</location>
    </subcellularLocation>
</comment>
<comment type="similarity">
    <text evidence="1">Belongs to the cytidylate kinase family. Type 1 subfamily.</text>
</comment>
<feature type="chain" id="PRO_1000119002" description="Cytidylate kinase">
    <location>
        <begin position="1"/>
        <end position="228"/>
    </location>
</feature>
<feature type="binding site" evidence="1">
    <location>
        <begin position="10"/>
        <end position="18"/>
    </location>
    <ligand>
        <name>ATP</name>
        <dbReference type="ChEBI" id="CHEBI:30616"/>
    </ligand>
</feature>
<dbReference type="EC" id="2.7.4.25" evidence="1"/>
<dbReference type="EMBL" id="CP001182">
    <property type="protein sequence ID" value="ACJ41195.1"/>
    <property type="molecule type" value="Genomic_DNA"/>
</dbReference>
<dbReference type="RefSeq" id="WP_000218021.1">
    <property type="nucleotide sequence ID" value="NC_011586.2"/>
</dbReference>
<dbReference type="SMR" id="B7I530"/>
<dbReference type="KEGG" id="abn:AB57_1816"/>
<dbReference type="HOGENOM" id="CLU_079959_2_0_6"/>
<dbReference type="Proteomes" id="UP000007094">
    <property type="component" value="Chromosome"/>
</dbReference>
<dbReference type="GO" id="GO:0005829">
    <property type="term" value="C:cytosol"/>
    <property type="evidence" value="ECO:0007669"/>
    <property type="project" value="TreeGrafter"/>
</dbReference>
<dbReference type="GO" id="GO:0005524">
    <property type="term" value="F:ATP binding"/>
    <property type="evidence" value="ECO:0007669"/>
    <property type="project" value="UniProtKB-UniRule"/>
</dbReference>
<dbReference type="GO" id="GO:0036430">
    <property type="term" value="F:CMP kinase activity"/>
    <property type="evidence" value="ECO:0007669"/>
    <property type="project" value="RHEA"/>
</dbReference>
<dbReference type="GO" id="GO:0036431">
    <property type="term" value="F:dCMP kinase activity"/>
    <property type="evidence" value="ECO:0007669"/>
    <property type="project" value="RHEA"/>
</dbReference>
<dbReference type="GO" id="GO:0015949">
    <property type="term" value="P:nucleobase-containing small molecule interconversion"/>
    <property type="evidence" value="ECO:0007669"/>
    <property type="project" value="TreeGrafter"/>
</dbReference>
<dbReference type="GO" id="GO:0006220">
    <property type="term" value="P:pyrimidine nucleotide metabolic process"/>
    <property type="evidence" value="ECO:0007669"/>
    <property type="project" value="UniProtKB-UniRule"/>
</dbReference>
<dbReference type="CDD" id="cd02020">
    <property type="entry name" value="CMPK"/>
    <property type="match status" value="1"/>
</dbReference>
<dbReference type="Gene3D" id="3.40.50.300">
    <property type="entry name" value="P-loop containing nucleotide triphosphate hydrolases"/>
    <property type="match status" value="1"/>
</dbReference>
<dbReference type="HAMAP" id="MF_00238">
    <property type="entry name" value="Cytidyl_kinase_type1"/>
    <property type="match status" value="1"/>
</dbReference>
<dbReference type="InterPro" id="IPR003136">
    <property type="entry name" value="Cytidylate_kin"/>
</dbReference>
<dbReference type="InterPro" id="IPR011994">
    <property type="entry name" value="Cytidylate_kinase_dom"/>
</dbReference>
<dbReference type="InterPro" id="IPR027417">
    <property type="entry name" value="P-loop_NTPase"/>
</dbReference>
<dbReference type="NCBIfam" id="TIGR00017">
    <property type="entry name" value="cmk"/>
    <property type="match status" value="1"/>
</dbReference>
<dbReference type="PANTHER" id="PTHR21299:SF2">
    <property type="entry name" value="CYTIDYLATE KINASE"/>
    <property type="match status" value="1"/>
</dbReference>
<dbReference type="PANTHER" id="PTHR21299">
    <property type="entry name" value="CYTIDYLATE KINASE/PANTOATE-BETA-ALANINE LIGASE"/>
    <property type="match status" value="1"/>
</dbReference>
<dbReference type="Pfam" id="PF02224">
    <property type="entry name" value="Cytidylate_kin"/>
    <property type="match status" value="1"/>
</dbReference>
<dbReference type="SUPFAM" id="SSF52540">
    <property type="entry name" value="P-loop containing nucleoside triphosphate hydrolases"/>
    <property type="match status" value="1"/>
</dbReference>